<keyword id="KW-1035">Host cytoplasm</keyword>
<keyword id="KW-1048">Host nucleus</keyword>
<keyword id="KW-0426">Late protein</keyword>
<keyword id="KW-1185">Reference proteome</keyword>
<keyword id="KW-0946">Virion</keyword>
<keyword id="KW-0920">Virion tegument</keyword>
<reference key="1">
    <citation type="journal article" date="1999" name="J. Virol.">
        <title>Identification of a spliced gene from Kaposi's sarcoma-associated herpesvirus encoding a protein with similarities to latent membrane proteins 1 and 2A of Epstein-Barr virus.</title>
        <authorList>
            <person name="Glenn M."/>
            <person name="Rainbow L."/>
            <person name="Aurade F."/>
            <person name="Davison A."/>
            <person name="Schulz T.F."/>
        </authorList>
    </citation>
    <scope>NUCLEOTIDE SEQUENCE [LARGE SCALE GENOMIC DNA]</scope>
</reference>
<reference key="2">
    <citation type="journal article" date="2006" name="J. Gen. Virol.">
        <title>Kaposi's sarcoma-associated herpesvirus immune modulation: an overview.</title>
        <authorList>
            <person name="Rezaee S.A.R."/>
            <person name="Cunningham C."/>
            <person name="Davison A.J."/>
            <person name="Blackbourn D.J."/>
        </authorList>
    </citation>
    <scope>NUCLEOTIDE SEQUENCE [LARGE SCALE GENOMIC DNA]</scope>
</reference>
<reference key="3">
    <citation type="journal article" date="2005" name="J. Virol.">
        <title>Virion proteins of Kaposi's sarcoma-associated herpesvirus.</title>
        <authorList>
            <person name="Zhu F.X."/>
            <person name="Chong J.M."/>
            <person name="Wu L."/>
            <person name="Yuan Y."/>
        </authorList>
    </citation>
    <scope>VIRION</scope>
</reference>
<comment type="function">
    <text evidence="1">Plays a critical role in cytoplasmic virus egress. Participates in the final step of tegumentation and envelope acquisition within the host cytoplasm by directly interacting with the capsid. Upon virion binding to target cell, a signaling cascade is triggered to disrupt the interaction with the capsid, thereby preparing capsid uncoating.</text>
</comment>
<comment type="subunit">
    <text evidence="1">Interacts with cytoplasmic envelopment protein 3 and with the capsid.</text>
</comment>
<comment type="subcellular location">
    <subcellularLocation>
        <location evidence="1 2">Virion tegument</location>
    </subcellularLocation>
    <subcellularLocation>
        <location evidence="1">Host cytoplasm</location>
    </subcellularLocation>
    <subcellularLocation>
        <location evidence="1">Host nucleus</location>
    </subcellularLocation>
    <text evidence="1">Localizes in the host nucleus up to 18 hours postinfection, but at later times localizes to punctate, cytoplasmic structures.</text>
</comment>
<comment type="similarity">
    <text evidence="1">Belongs to the herpesviridae cytoplasmic envelopment protein 2 family.</text>
</comment>
<sequence length="334" mass="36732">MASRRRKLRNFLNKECIWTVNPMSGDHIKVFNACTSISPVYDPELVTSYALSVPAYNVSVAILLHKVMGPCVAVGINGEMIMYVVSQCVSVRPVPGRDGMALIYFGQFLEEASGLRFPYIAPPPSREHVPDLTRQELVHTSQVVRRGDLTNCTMGLEFRNVNPFVWLGGGSVWLLFLGVDYMAFCPGVDGMPSLARVAALLTRCDHPDCVHCHGLRGHVNVFRGYCSAQSPGLSNICPCIKSCGTGNGVTRVTGNRNFLGLLFDPIVQSRVTALKITSHPTPTHVENVLTGVLDDGTLVPSSKAPWVLLRMSDYFSRLLIYECKKLKALGLRSY</sequence>
<evidence type="ECO:0000255" key="1">
    <source>
        <dbReference type="HAMAP-Rule" id="MF_04039"/>
    </source>
</evidence>
<evidence type="ECO:0000269" key="2">
    <source>
    </source>
</evidence>
<accession>F5HEF2</accession>
<proteinExistence type="inferred from homology"/>
<name>CEP2_HHV8P</name>
<dbReference type="EMBL" id="AF148805">
    <property type="protein sequence ID" value="ABD28884.1"/>
    <property type="molecule type" value="Genomic_DNA"/>
</dbReference>
<dbReference type="RefSeq" id="YP_001129386.1">
    <property type="nucleotide sequence ID" value="NC_009333.1"/>
</dbReference>
<dbReference type="GeneID" id="4961502"/>
<dbReference type="KEGG" id="vg:4961502"/>
<dbReference type="Proteomes" id="UP000000942">
    <property type="component" value="Segment"/>
</dbReference>
<dbReference type="GO" id="GO:0030430">
    <property type="term" value="C:host cell cytoplasm"/>
    <property type="evidence" value="ECO:0007669"/>
    <property type="project" value="UniProtKB-SubCell"/>
</dbReference>
<dbReference type="GO" id="GO:0042025">
    <property type="term" value="C:host cell nucleus"/>
    <property type="evidence" value="ECO:0007669"/>
    <property type="project" value="UniProtKB-SubCell"/>
</dbReference>
<dbReference type="GO" id="GO:0019033">
    <property type="term" value="C:viral tegument"/>
    <property type="evidence" value="ECO:0000314"/>
    <property type="project" value="CACAO"/>
</dbReference>
<dbReference type="HAMAP" id="MF_04039">
    <property type="entry name" value="HSV_CEP2"/>
    <property type="match status" value="1"/>
</dbReference>
<dbReference type="InterPro" id="IPR004286">
    <property type="entry name" value="Herpes_UL16/UL94"/>
</dbReference>
<dbReference type="Pfam" id="PF03044">
    <property type="entry name" value="Herpes_UL16"/>
    <property type="match status" value="1"/>
</dbReference>
<organismHost>
    <name type="scientific">Homo sapiens</name>
    <name type="common">Human</name>
    <dbReference type="NCBI Taxonomy" id="9606"/>
</organismHost>
<gene>
    <name type="primary">ORF33</name>
</gene>
<organism>
    <name type="scientific">Human herpesvirus 8 type P (isolate GK18)</name>
    <name type="common">HHV-8</name>
    <name type="synonym">Kaposi's sarcoma-associated herpesvirus</name>
    <dbReference type="NCBI Taxonomy" id="868565"/>
    <lineage>
        <taxon>Viruses</taxon>
        <taxon>Duplodnaviria</taxon>
        <taxon>Heunggongvirae</taxon>
        <taxon>Peploviricota</taxon>
        <taxon>Herviviricetes</taxon>
        <taxon>Herpesvirales</taxon>
        <taxon>Orthoherpesviridae</taxon>
        <taxon>Gammaherpesvirinae</taxon>
        <taxon>Rhadinovirus</taxon>
        <taxon>Rhadinovirus humangamma8</taxon>
        <taxon>Human herpesvirus 8</taxon>
    </lineage>
</organism>
<protein>
    <recommendedName>
        <fullName evidence="1">Cytoplasmic envelopment protein 2</fullName>
    </recommendedName>
</protein>
<feature type="chain" id="PRO_0000423764" description="Cytoplasmic envelopment protein 2">
    <location>
        <begin position="1"/>
        <end position="334"/>
    </location>
</feature>